<protein>
    <recommendedName>
        <fullName evidence="1">tRNA(Ile)-lysidine synthase</fullName>
        <ecNumber evidence="1">6.3.4.19</ecNumber>
    </recommendedName>
    <alternativeName>
        <fullName evidence="1">tRNA(Ile)-2-lysyl-cytidine synthase</fullName>
    </alternativeName>
    <alternativeName>
        <fullName evidence="1">tRNA(Ile)-lysidine synthetase</fullName>
    </alternativeName>
</protein>
<gene>
    <name evidence="1" type="primary">tilS</name>
    <name type="ordered locus">gbs0013</name>
</gene>
<comment type="function">
    <text evidence="1">Ligates lysine onto the cytidine present at position 34 of the AUA codon-specific tRNA(Ile) that contains the anticodon CAU, in an ATP-dependent manner. Cytidine is converted to lysidine, thus changing the amino acid specificity of the tRNA from methionine to isoleucine.</text>
</comment>
<comment type="catalytic activity">
    <reaction evidence="1">
        <text>cytidine(34) in tRNA(Ile2) + L-lysine + ATP = lysidine(34) in tRNA(Ile2) + AMP + diphosphate + H(+)</text>
        <dbReference type="Rhea" id="RHEA:43744"/>
        <dbReference type="Rhea" id="RHEA-COMP:10625"/>
        <dbReference type="Rhea" id="RHEA-COMP:10670"/>
        <dbReference type="ChEBI" id="CHEBI:15378"/>
        <dbReference type="ChEBI" id="CHEBI:30616"/>
        <dbReference type="ChEBI" id="CHEBI:32551"/>
        <dbReference type="ChEBI" id="CHEBI:33019"/>
        <dbReference type="ChEBI" id="CHEBI:82748"/>
        <dbReference type="ChEBI" id="CHEBI:83665"/>
        <dbReference type="ChEBI" id="CHEBI:456215"/>
        <dbReference type="EC" id="6.3.4.19"/>
    </reaction>
</comment>
<comment type="subcellular location">
    <subcellularLocation>
        <location evidence="1">Cytoplasm</location>
    </subcellularLocation>
</comment>
<comment type="domain">
    <text>The N-terminal region contains the highly conserved SGGXDS motif, predicted to be a P-loop motif involved in ATP binding.</text>
</comment>
<comment type="similarity">
    <text evidence="1">Belongs to the tRNA(Ile)-lysidine synthase family.</text>
</comment>
<reference key="1">
    <citation type="journal article" date="2002" name="Mol. Microbiol.">
        <title>Genome sequence of Streptococcus agalactiae, a pathogen causing invasive neonatal disease.</title>
        <authorList>
            <person name="Glaser P."/>
            <person name="Rusniok C."/>
            <person name="Buchrieser C."/>
            <person name="Chevalier F."/>
            <person name="Frangeul L."/>
            <person name="Msadek T."/>
            <person name="Zouine M."/>
            <person name="Couve E."/>
            <person name="Lalioui L."/>
            <person name="Poyart C."/>
            <person name="Trieu-Cuot P."/>
            <person name="Kunst F."/>
        </authorList>
    </citation>
    <scope>NUCLEOTIDE SEQUENCE [LARGE SCALE GENOMIC DNA]</scope>
    <source>
        <strain>NEM316</strain>
    </source>
</reference>
<proteinExistence type="inferred from homology"/>
<organism>
    <name type="scientific">Streptococcus agalactiae serotype III (strain NEM316)</name>
    <dbReference type="NCBI Taxonomy" id="211110"/>
    <lineage>
        <taxon>Bacteria</taxon>
        <taxon>Bacillati</taxon>
        <taxon>Bacillota</taxon>
        <taxon>Bacilli</taxon>
        <taxon>Lactobacillales</taxon>
        <taxon>Streptococcaceae</taxon>
        <taxon>Streptococcus</taxon>
    </lineage>
</organism>
<dbReference type="EC" id="6.3.4.19" evidence="1"/>
<dbReference type="EMBL" id="AL766843">
    <property type="protein sequence ID" value="CAD45658.1"/>
    <property type="molecule type" value="Genomic_DNA"/>
</dbReference>
<dbReference type="RefSeq" id="WP_000282856.1">
    <property type="nucleotide sequence ID" value="NC_004368.1"/>
</dbReference>
<dbReference type="SMR" id="Q8E7Y2"/>
<dbReference type="KEGG" id="san:gbs0013"/>
<dbReference type="eggNOG" id="COG0037">
    <property type="taxonomic scope" value="Bacteria"/>
</dbReference>
<dbReference type="HOGENOM" id="CLU_018869_0_2_9"/>
<dbReference type="Proteomes" id="UP000000823">
    <property type="component" value="Chromosome"/>
</dbReference>
<dbReference type="GO" id="GO:0005737">
    <property type="term" value="C:cytoplasm"/>
    <property type="evidence" value="ECO:0007669"/>
    <property type="project" value="UniProtKB-SubCell"/>
</dbReference>
<dbReference type="GO" id="GO:0005524">
    <property type="term" value="F:ATP binding"/>
    <property type="evidence" value="ECO:0007669"/>
    <property type="project" value="UniProtKB-UniRule"/>
</dbReference>
<dbReference type="GO" id="GO:0032267">
    <property type="term" value="F:tRNA(Ile)-lysidine synthase activity"/>
    <property type="evidence" value="ECO:0007669"/>
    <property type="project" value="UniProtKB-EC"/>
</dbReference>
<dbReference type="GO" id="GO:0006400">
    <property type="term" value="P:tRNA modification"/>
    <property type="evidence" value="ECO:0007669"/>
    <property type="project" value="UniProtKB-UniRule"/>
</dbReference>
<dbReference type="CDD" id="cd01992">
    <property type="entry name" value="TilS_N"/>
    <property type="match status" value="1"/>
</dbReference>
<dbReference type="Gene3D" id="3.40.50.620">
    <property type="entry name" value="HUPs"/>
    <property type="match status" value="1"/>
</dbReference>
<dbReference type="HAMAP" id="MF_01161">
    <property type="entry name" value="tRNA_Ile_lys_synt"/>
    <property type="match status" value="1"/>
</dbReference>
<dbReference type="InterPro" id="IPR012796">
    <property type="entry name" value="Lysidine-tRNA-synth_C"/>
</dbReference>
<dbReference type="InterPro" id="IPR014729">
    <property type="entry name" value="Rossmann-like_a/b/a_fold"/>
</dbReference>
<dbReference type="InterPro" id="IPR011063">
    <property type="entry name" value="TilS/TtcA_N"/>
</dbReference>
<dbReference type="InterPro" id="IPR012094">
    <property type="entry name" value="tRNA_Ile_lys_synt"/>
</dbReference>
<dbReference type="InterPro" id="IPR012795">
    <property type="entry name" value="tRNA_Ile_lys_synt_N"/>
</dbReference>
<dbReference type="NCBIfam" id="TIGR02433">
    <property type="entry name" value="lysidine_TilS_C"/>
    <property type="match status" value="1"/>
</dbReference>
<dbReference type="NCBIfam" id="TIGR02432">
    <property type="entry name" value="lysidine_TilS_N"/>
    <property type="match status" value="1"/>
</dbReference>
<dbReference type="PANTHER" id="PTHR43033">
    <property type="entry name" value="TRNA(ILE)-LYSIDINE SYNTHASE-RELATED"/>
    <property type="match status" value="1"/>
</dbReference>
<dbReference type="PANTHER" id="PTHR43033:SF1">
    <property type="entry name" value="TRNA(ILE)-LYSIDINE SYNTHASE-RELATED"/>
    <property type="match status" value="1"/>
</dbReference>
<dbReference type="Pfam" id="PF01171">
    <property type="entry name" value="ATP_bind_3"/>
    <property type="match status" value="1"/>
</dbReference>
<dbReference type="SMART" id="SM00977">
    <property type="entry name" value="TilS_C"/>
    <property type="match status" value="1"/>
</dbReference>
<dbReference type="SUPFAM" id="SSF52402">
    <property type="entry name" value="Adenine nucleotide alpha hydrolases-like"/>
    <property type="match status" value="1"/>
</dbReference>
<dbReference type="SUPFAM" id="SSF56037">
    <property type="entry name" value="PheT/TilS domain"/>
    <property type="match status" value="1"/>
</dbReference>
<sequence length="424" mass="49933">MYNTILKDTLSKGLFTAHQKVLIAVSGGIDSINLLQFLYQYQKELSISIGIAHINHGQRKESEKEEEYIRQWGQIHDVPVFISYFQGIFSEDRARNHRYNFFSKVMREEGYTALVTAHHADDQAETVFMRILRGSRLRYLSGIKQVSAFANGQLIRPFLPYKKELLPNIFHFEDASNASSDYLRNRIRNVYFPALERENNQLKDSLITLSEETECLFTALTDLTRSIEVTNCYDFLRQTHSVQEFLLQDYISKFPDLQVSKEQFRVILKLIRTKANIDYTIKSGYFLHKDYESFHITKIHPKTDSFKVEKRLELHNIQIFSQYLFSYGKFISQADITIPIYDTSPIILRRRKEGDRIFLGNHTKKIRRLFIDEKITLKEREEAVIGEQNKELIFVIVAGRTYLRKPSEHDIMKGKLYIENLEKR</sequence>
<accession>Q8E7Y2</accession>
<feature type="chain" id="PRO_0000181773" description="tRNA(Ile)-lysidine synthase">
    <location>
        <begin position="1"/>
        <end position="424"/>
    </location>
</feature>
<feature type="binding site" evidence="1">
    <location>
        <begin position="26"/>
        <end position="31"/>
    </location>
    <ligand>
        <name>ATP</name>
        <dbReference type="ChEBI" id="CHEBI:30616"/>
    </ligand>
</feature>
<evidence type="ECO:0000255" key="1">
    <source>
        <dbReference type="HAMAP-Rule" id="MF_01161"/>
    </source>
</evidence>
<keyword id="KW-0067">ATP-binding</keyword>
<keyword id="KW-0963">Cytoplasm</keyword>
<keyword id="KW-0436">Ligase</keyword>
<keyword id="KW-0547">Nucleotide-binding</keyword>
<keyword id="KW-0819">tRNA processing</keyword>
<name>TILS_STRA3</name>